<proteinExistence type="evidence at protein level"/>
<comment type="function">
    <text evidence="1 7">Probable transcription factor (By similarity). Involved, together with PDF2, in the regulation of flower organs development by promoting the expression of APETALA 3 (AP3) in the epidermis and internal cell layers of developing flowers (PubMed:23590515).</text>
</comment>
<comment type="subunit">
    <text evidence="8">Interacts with AIL7/PLT7, ANT, BBM and AIL1.</text>
</comment>
<comment type="interaction">
    <interactant intactId="EBI-15196469">
        <id>Q94C37</id>
    </interactant>
    <interactant intactId="EBI-15192327">
        <id>Q9LEZ9</id>
        <label>TCP17</label>
    </interactant>
    <organismsDiffer>false</organismsDiffer>
    <experiments>3</experiments>
</comment>
<comment type="subcellular location">
    <subcellularLocation>
        <location evidence="11">Nucleus</location>
    </subcellularLocation>
</comment>
<comment type="alternative products">
    <event type="alternative splicing"/>
    <isoform>
        <id>Q94C37-1</id>
        <name>1</name>
        <sequence type="displayed"/>
    </isoform>
    <text>A number of isoforms are produced. According to EST sequences.</text>
</comment>
<comment type="tissue specificity">
    <text evidence="6">Expressed in hairless cell files of the hypocotyl epidermis. Expressed in shoot apical meristem (SAM) with higher levels in L1 cells and the epidermal layer of young leaves (PubMed:16778018). Expressed in primary root tips, in the L1 of apical inflorescence meristems, early flower primordia, carpel epidermis, ovule primordia, nucellus, chalaze and seed coat (PubMed:16778018).</text>
</comment>
<comment type="disruption phenotype">
    <text evidence="7">The double mutant pdf2-1 hdg2-3 exhibits abnormal flowers with sepaloid petals and carpelloid stamens in association with a reduced expression of APETALA 3 (AP3) in the epidermis and internal cell layers of developing flowers.</text>
</comment>
<comment type="similarity">
    <text evidence="11">Belongs to the HD-ZIP homeobox family. Class IV subfamily.</text>
</comment>
<comment type="sequence caution" evidence="11">
    <conflict type="erroneous gene model prediction">
        <sequence resource="EMBL-CDS" id="AAB71455"/>
    </conflict>
</comment>
<evidence type="ECO:0000250" key="1">
    <source>
        <dbReference type="UniProtKB" id="Q0WV12"/>
    </source>
</evidence>
<evidence type="ECO:0000255" key="2"/>
<evidence type="ECO:0000255" key="3">
    <source>
        <dbReference type="PROSITE-ProRule" id="PRU00108"/>
    </source>
</evidence>
<evidence type="ECO:0000255" key="4">
    <source>
        <dbReference type="PROSITE-ProRule" id="PRU00197"/>
    </source>
</evidence>
<evidence type="ECO:0000256" key="5">
    <source>
        <dbReference type="SAM" id="MobiDB-lite"/>
    </source>
</evidence>
<evidence type="ECO:0000269" key="6">
    <source>
    </source>
</evidence>
<evidence type="ECO:0000269" key="7">
    <source>
    </source>
</evidence>
<evidence type="ECO:0000269" key="8">
    <source>
    </source>
</evidence>
<evidence type="ECO:0000303" key="9">
    <source>
    </source>
</evidence>
<evidence type="ECO:0000303" key="10">
    <source>
    </source>
</evidence>
<evidence type="ECO:0000305" key="11"/>
<evidence type="ECO:0000312" key="12">
    <source>
        <dbReference type="Araport" id="AT1G05230"/>
    </source>
</evidence>
<evidence type="ECO:0000312" key="13">
    <source>
        <dbReference type="EMBL" id="AAB71455.1"/>
    </source>
</evidence>
<sequence>MFEPNMLLAAMNNADSNNHNYNHEDNNNEGFLRDDEFDSPNTKSGSENQEGGSGNDQDPLHPNKKKRYHRHTQLQIQEMEAFFKECPHPDDKQRKQLSRELNLEPLQVKFWFQNKRTQMKNHHERHENSHLRAENEKLRNDNLRYREALANASCPNCGGPTAIGEMSFDEHQLRLENARLREEIDRISAIAAKYVGKPVSNYPLMSPPPLPPRPLELAMGNIGGEAYGNNPNDLLKSITAPTESDKPVIIDLSVAAMEELMRMVQVDEPLWKSLVLDEEEYARTFPRGIGPRPAGYRSEASRESAVVIMNHVNIVEILMDVNQWSTIFAGMVSRAMTLAVLSTGVAGNYNGALQVMSAEFQVPSPLVPTRETYFARYCKQQGDGSWAVVDISLDSLQPNPPARCRRRASGCLIQELPNGYSKVTWVEHVEVDDRGVHNLYKHMVSTGHAFGAKRWVAILDRQCERLASVMATNISSGEVGVITNQEGRRSMLKLAERMVISFCAGVSASTAHTWTTLSGTGAEDVRVMTRKSVDDPGRPPGIVLSAATSFWIPVPPKRVFDFLRDENSRNEWDILSNGGVVQEMAHIANGRDTGNCVSLLRVNSANSSQSNMLILQESCTDPTASFVIYAPVDIVAMNIVLNGGDPDYVALLPSGFAILPDGNANSGAPGGDGGSLLTVAFQILVDSVPTAKLSLGSVATVNNLIACTVERIKASMSCETA</sequence>
<organism>
    <name type="scientific">Arabidopsis thaliana</name>
    <name type="common">Mouse-ear cress</name>
    <dbReference type="NCBI Taxonomy" id="3702"/>
    <lineage>
        <taxon>Eukaryota</taxon>
        <taxon>Viridiplantae</taxon>
        <taxon>Streptophyta</taxon>
        <taxon>Embryophyta</taxon>
        <taxon>Tracheophyta</taxon>
        <taxon>Spermatophyta</taxon>
        <taxon>Magnoliopsida</taxon>
        <taxon>eudicotyledons</taxon>
        <taxon>Gunneridae</taxon>
        <taxon>Pentapetalae</taxon>
        <taxon>rosids</taxon>
        <taxon>malvids</taxon>
        <taxon>Brassicales</taxon>
        <taxon>Brassicaceae</taxon>
        <taxon>Camelineae</taxon>
        <taxon>Arabidopsis</taxon>
    </lineage>
</organism>
<keyword id="KW-0025">Alternative splicing</keyword>
<keyword id="KW-0175">Coiled coil</keyword>
<keyword id="KW-0238">DNA-binding</keyword>
<keyword id="KW-0371">Homeobox</keyword>
<keyword id="KW-0539">Nucleus</keyword>
<keyword id="KW-1185">Reference proteome</keyword>
<keyword id="KW-0804">Transcription</keyword>
<keyword id="KW-0805">Transcription regulation</keyword>
<feature type="chain" id="PRO_0000331664" description="Homeobox-leucine zipper protein HDG2">
    <location>
        <begin position="1"/>
        <end position="721"/>
    </location>
</feature>
<feature type="domain" description="START" evidence="4">
    <location>
        <begin position="242"/>
        <end position="468"/>
    </location>
</feature>
<feature type="DNA-binding region" description="Homeobox" evidence="3">
    <location>
        <begin position="64"/>
        <end position="123"/>
    </location>
</feature>
<feature type="region of interest" description="Disordered" evidence="5">
    <location>
        <begin position="17"/>
        <end position="70"/>
    </location>
</feature>
<feature type="coiled-coil region" evidence="2">
    <location>
        <begin position="120"/>
        <end position="194"/>
    </location>
</feature>
<feature type="compositionally biased region" description="Basic and acidic residues" evidence="5">
    <location>
        <begin position="21"/>
        <end position="34"/>
    </location>
</feature>
<reference key="1">
    <citation type="journal article" date="2000" name="Nature">
        <title>Sequence and analysis of chromosome 1 of the plant Arabidopsis thaliana.</title>
        <authorList>
            <person name="Theologis A."/>
            <person name="Ecker J.R."/>
            <person name="Palm C.J."/>
            <person name="Federspiel N.A."/>
            <person name="Kaul S."/>
            <person name="White O."/>
            <person name="Alonso J."/>
            <person name="Altafi H."/>
            <person name="Araujo R."/>
            <person name="Bowman C.L."/>
            <person name="Brooks S.Y."/>
            <person name="Buehler E."/>
            <person name="Chan A."/>
            <person name="Chao Q."/>
            <person name="Chen H."/>
            <person name="Cheuk R.F."/>
            <person name="Chin C.W."/>
            <person name="Chung M.K."/>
            <person name="Conn L."/>
            <person name="Conway A.B."/>
            <person name="Conway A.R."/>
            <person name="Creasy T.H."/>
            <person name="Dewar K."/>
            <person name="Dunn P."/>
            <person name="Etgu P."/>
            <person name="Feldblyum T.V."/>
            <person name="Feng J.-D."/>
            <person name="Fong B."/>
            <person name="Fujii C.Y."/>
            <person name="Gill J.E."/>
            <person name="Goldsmith A.D."/>
            <person name="Haas B."/>
            <person name="Hansen N.F."/>
            <person name="Hughes B."/>
            <person name="Huizar L."/>
            <person name="Hunter J.L."/>
            <person name="Jenkins J."/>
            <person name="Johnson-Hopson C."/>
            <person name="Khan S."/>
            <person name="Khaykin E."/>
            <person name="Kim C.J."/>
            <person name="Koo H.L."/>
            <person name="Kremenetskaia I."/>
            <person name="Kurtz D.B."/>
            <person name="Kwan A."/>
            <person name="Lam B."/>
            <person name="Langin-Hooper S."/>
            <person name="Lee A."/>
            <person name="Lee J.M."/>
            <person name="Lenz C.A."/>
            <person name="Li J.H."/>
            <person name="Li Y.-P."/>
            <person name="Lin X."/>
            <person name="Liu S.X."/>
            <person name="Liu Z.A."/>
            <person name="Luros J.S."/>
            <person name="Maiti R."/>
            <person name="Marziali A."/>
            <person name="Militscher J."/>
            <person name="Miranda M."/>
            <person name="Nguyen M."/>
            <person name="Nierman W.C."/>
            <person name="Osborne B.I."/>
            <person name="Pai G."/>
            <person name="Peterson J."/>
            <person name="Pham P.K."/>
            <person name="Rizzo M."/>
            <person name="Rooney T."/>
            <person name="Rowley D."/>
            <person name="Sakano H."/>
            <person name="Salzberg S.L."/>
            <person name="Schwartz J.R."/>
            <person name="Shinn P."/>
            <person name="Southwick A.M."/>
            <person name="Sun H."/>
            <person name="Tallon L.J."/>
            <person name="Tambunga G."/>
            <person name="Toriumi M.J."/>
            <person name="Town C.D."/>
            <person name="Utterback T."/>
            <person name="Van Aken S."/>
            <person name="Vaysberg M."/>
            <person name="Vysotskaia V.S."/>
            <person name="Walker M."/>
            <person name="Wu D."/>
            <person name="Yu G."/>
            <person name="Fraser C.M."/>
            <person name="Venter J.C."/>
            <person name="Davis R.W."/>
        </authorList>
    </citation>
    <scope>NUCLEOTIDE SEQUENCE [LARGE SCALE GENOMIC DNA]</scope>
    <source>
        <strain>cv. Columbia</strain>
    </source>
</reference>
<reference key="2">
    <citation type="journal article" date="2017" name="Plant J.">
        <title>Araport11: a complete reannotation of the Arabidopsis thaliana reference genome.</title>
        <authorList>
            <person name="Cheng C.Y."/>
            <person name="Krishnakumar V."/>
            <person name="Chan A.P."/>
            <person name="Thibaud-Nissen F."/>
            <person name="Schobel S."/>
            <person name="Town C.D."/>
        </authorList>
    </citation>
    <scope>GENOME REANNOTATION</scope>
    <source>
        <strain>cv. Columbia</strain>
    </source>
</reference>
<reference key="3">
    <citation type="journal article" date="2003" name="Science">
        <title>Empirical analysis of transcriptional activity in the Arabidopsis genome.</title>
        <authorList>
            <person name="Yamada K."/>
            <person name="Lim J."/>
            <person name="Dale J.M."/>
            <person name="Chen H."/>
            <person name="Shinn P."/>
            <person name="Palm C.J."/>
            <person name="Southwick A.M."/>
            <person name="Wu H.C."/>
            <person name="Kim C.J."/>
            <person name="Nguyen M."/>
            <person name="Pham P.K."/>
            <person name="Cheuk R.F."/>
            <person name="Karlin-Newmann G."/>
            <person name="Liu S.X."/>
            <person name="Lam B."/>
            <person name="Sakano H."/>
            <person name="Wu T."/>
            <person name="Yu G."/>
            <person name="Miranda M."/>
            <person name="Quach H.L."/>
            <person name="Tripp M."/>
            <person name="Chang C.H."/>
            <person name="Lee J.M."/>
            <person name="Toriumi M.J."/>
            <person name="Chan M.M."/>
            <person name="Tang C.C."/>
            <person name="Onodera C.S."/>
            <person name="Deng J.M."/>
            <person name="Akiyama K."/>
            <person name="Ansari Y."/>
            <person name="Arakawa T."/>
            <person name="Banh J."/>
            <person name="Banno F."/>
            <person name="Bowser L."/>
            <person name="Brooks S.Y."/>
            <person name="Carninci P."/>
            <person name="Chao Q."/>
            <person name="Choy N."/>
            <person name="Enju A."/>
            <person name="Goldsmith A.D."/>
            <person name="Gurjal M."/>
            <person name="Hansen N.F."/>
            <person name="Hayashizaki Y."/>
            <person name="Johnson-Hopson C."/>
            <person name="Hsuan V.W."/>
            <person name="Iida K."/>
            <person name="Karnes M."/>
            <person name="Khan S."/>
            <person name="Koesema E."/>
            <person name="Ishida J."/>
            <person name="Jiang P.X."/>
            <person name="Jones T."/>
            <person name="Kawai J."/>
            <person name="Kamiya A."/>
            <person name="Meyers C."/>
            <person name="Nakajima M."/>
            <person name="Narusaka M."/>
            <person name="Seki M."/>
            <person name="Sakurai T."/>
            <person name="Satou M."/>
            <person name="Tamse R."/>
            <person name="Vaysberg M."/>
            <person name="Wallender E.K."/>
            <person name="Wong C."/>
            <person name="Yamamura Y."/>
            <person name="Yuan S."/>
            <person name="Shinozaki K."/>
            <person name="Davis R.W."/>
            <person name="Theologis A."/>
            <person name="Ecker J.R."/>
        </authorList>
    </citation>
    <scope>NUCLEOTIDE SEQUENCE [LARGE SCALE MRNA]</scope>
    <source>
        <strain>cv. Columbia</strain>
    </source>
</reference>
<reference key="4">
    <citation type="journal article" date="2000" name="Plant Mol. Biol.">
        <title>Organization and structural evolution of four multigene families in Arabidopsis thaliana: AtLCAD, AtLGT, AtMYST and AtHD-GL2.</title>
        <authorList>
            <person name="Tavares R."/>
            <person name="Aubourg S."/>
            <person name="Lecharny A."/>
            <person name="Kreis M."/>
        </authorList>
    </citation>
    <scope>GENE FAMILY</scope>
</reference>
<reference key="5">
    <citation type="journal article" date="2006" name="Plant Physiol.">
        <title>Characterization of the class IV homeodomain-leucine zipper gene family in Arabidopsis.</title>
        <authorList>
            <person name="Nakamura M."/>
            <person name="Katsumata H."/>
            <person name="Abe M."/>
            <person name="Yabe N."/>
            <person name="Komeda Y."/>
            <person name="Yamamoto K.T."/>
            <person name="Takahashi T."/>
        </authorList>
    </citation>
    <scope>TISSUE SPECIFICITY</scope>
    <scope>GENE FAMILY</scope>
    <scope>NOMENCLATURE</scope>
</reference>
<reference key="6">
    <citation type="journal article" date="2013" name="Plant J.">
        <title>Mutations in epidermis-specific HD-ZIP IV genes affect floral organ identity in Arabidopsis thaliana.</title>
        <authorList>
            <person name="Kamata N."/>
            <person name="Okada H."/>
            <person name="Komeda Y."/>
            <person name="Takahashi T."/>
        </authorList>
    </citation>
    <scope>FUNCTION</scope>
    <scope>DISRUPTION PHENOTYPE</scope>
    <source>
        <strain>cv. Columbia</strain>
    </source>
</reference>
<reference key="7">
    <citation type="journal article" date="2015" name="Development">
        <title>AIL and HDG proteins act antagonistically to control cell proliferation.</title>
        <authorList>
            <person name="Horstman A."/>
            <person name="Fukuoka H."/>
            <person name="Muino J.M."/>
            <person name="Nitsch L."/>
            <person name="Guo C."/>
            <person name="Passarinho P."/>
            <person name="Sanchez-Perez G."/>
            <person name="Immink R."/>
            <person name="Angenent G."/>
            <person name="Boutilier K."/>
        </authorList>
    </citation>
    <scope>INTERACTION WITH AIL7/PLT7; ANT; BBM AND AIL1</scope>
    <source>
        <strain>cv. Columbia</strain>
    </source>
</reference>
<name>HDG2_ARATH</name>
<accession>Q94C37</accession>
<accession>O23045</accession>
<protein>
    <recommendedName>
        <fullName evidence="10">Homeobox-leucine zipper protein HDG2</fullName>
    </recommendedName>
    <alternativeName>
        <fullName evidence="10">HD-ZIP protein HDG2</fullName>
    </alternativeName>
    <alternativeName>
        <fullName evidence="9">Homeodomain GLABRA 2-like protein 2</fullName>
    </alternativeName>
    <alternativeName>
        <fullName evidence="10">Homeodomain transcription factor HDG2</fullName>
    </alternativeName>
    <alternativeName>
        <fullName evidence="10">Protein HOMEODOMAIN GLABROUS 2</fullName>
    </alternativeName>
</protein>
<gene>
    <name evidence="10" type="primary">HDG2</name>
    <name evidence="9" type="synonym">HDGL2-2</name>
    <name evidence="12" type="ordered locus">At1g05230</name>
    <name evidence="13" type="ORF">YUP8H12.16</name>
</gene>
<dbReference type="EMBL" id="AC000098">
    <property type="protein sequence ID" value="AAB71455.1"/>
    <property type="status" value="ALT_SEQ"/>
    <property type="molecule type" value="Genomic_DNA"/>
</dbReference>
<dbReference type="EMBL" id="CP002684">
    <property type="protein sequence ID" value="AEE27809.1"/>
    <property type="molecule type" value="Genomic_DNA"/>
</dbReference>
<dbReference type="EMBL" id="CP002684">
    <property type="protein sequence ID" value="AEE27810.1"/>
    <property type="molecule type" value="Genomic_DNA"/>
</dbReference>
<dbReference type="EMBL" id="CP002684">
    <property type="protein sequence ID" value="AEE27812.1"/>
    <property type="molecule type" value="Genomic_DNA"/>
</dbReference>
<dbReference type="EMBL" id="CP002684">
    <property type="protein sequence ID" value="ANM60381.1"/>
    <property type="molecule type" value="Genomic_DNA"/>
</dbReference>
<dbReference type="EMBL" id="CP002684">
    <property type="protein sequence ID" value="ANM60382.1"/>
    <property type="molecule type" value="Genomic_DNA"/>
</dbReference>
<dbReference type="EMBL" id="CP002684">
    <property type="protein sequence ID" value="ANM60383.1"/>
    <property type="molecule type" value="Genomic_DNA"/>
</dbReference>
<dbReference type="EMBL" id="CP002684">
    <property type="protein sequence ID" value="ANM60384.1"/>
    <property type="molecule type" value="Genomic_DNA"/>
</dbReference>
<dbReference type="EMBL" id="CP002684">
    <property type="protein sequence ID" value="ANM60385.1"/>
    <property type="molecule type" value="Genomic_DNA"/>
</dbReference>
<dbReference type="EMBL" id="CP002684">
    <property type="protein sequence ID" value="ANM60386.1"/>
    <property type="molecule type" value="Genomic_DNA"/>
</dbReference>
<dbReference type="EMBL" id="CP002684">
    <property type="protein sequence ID" value="ANM60388.1"/>
    <property type="molecule type" value="Genomic_DNA"/>
</dbReference>
<dbReference type="EMBL" id="AY037177">
    <property type="protein sequence ID" value="AAK59762.1"/>
    <property type="molecule type" value="mRNA"/>
</dbReference>
<dbReference type="EMBL" id="AY091690">
    <property type="protein sequence ID" value="AAM10289.1"/>
    <property type="molecule type" value="mRNA"/>
</dbReference>
<dbReference type="PIR" id="G86186">
    <property type="entry name" value="G86186"/>
</dbReference>
<dbReference type="RefSeq" id="NP_001184911.1">
    <molecule id="Q94C37-1"/>
    <property type="nucleotide sequence ID" value="NM_001197982.1"/>
</dbReference>
<dbReference type="RefSeq" id="NP_001322673.1">
    <molecule id="Q94C37-1"/>
    <property type="nucleotide sequence ID" value="NM_001331531.1"/>
</dbReference>
<dbReference type="RefSeq" id="NP_001322674.1">
    <molecule id="Q94C37-1"/>
    <property type="nucleotide sequence ID" value="NM_001331532.1"/>
</dbReference>
<dbReference type="RefSeq" id="NP_001322675.1">
    <molecule id="Q94C37-1"/>
    <property type="nucleotide sequence ID" value="NM_001331533.1"/>
</dbReference>
<dbReference type="RefSeq" id="NP_001322676.1">
    <molecule id="Q94C37-1"/>
    <property type="nucleotide sequence ID" value="NM_001331534.1"/>
</dbReference>
<dbReference type="RefSeq" id="NP_001322677.1">
    <molecule id="Q94C37-1"/>
    <property type="nucleotide sequence ID" value="NM_001331535.1"/>
</dbReference>
<dbReference type="RefSeq" id="NP_001322678.1">
    <molecule id="Q94C37-1"/>
    <property type="nucleotide sequence ID" value="NM_001331529.1"/>
</dbReference>
<dbReference type="RefSeq" id="NP_001322680.1">
    <molecule id="Q94C37-1"/>
    <property type="nucleotide sequence ID" value="NM_001331528.1"/>
</dbReference>
<dbReference type="RefSeq" id="NP_172015.1">
    <molecule id="Q94C37-1"/>
    <property type="nucleotide sequence ID" value="NM_100402.3"/>
</dbReference>
<dbReference type="RefSeq" id="NP_849596.1">
    <molecule id="Q94C37-1"/>
    <property type="nucleotide sequence ID" value="NM_179265.2"/>
</dbReference>
<dbReference type="BioGRID" id="24491">
    <property type="interactions" value="18"/>
</dbReference>
<dbReference type="FunCoup" id="Q94C37">
    <property type="interactions" value="195"/>
</dbReference>
<dbReference type="IntAct" id="Q94C37">
    <property type="interactions" value="21"/>
</dbReference>
<dbReference type="STRING" id="3702.Q94C37"/>
<dbReference type="PaxDb" id="3702-AT1G05230.4"/>
<dbReference type="ProteomicsDB" id="230375">
    <molecule id="Q94C37-1"/>
</dbReference>
<dbReference type="EnsemblPlants" id="AT1G05230.1">
    <molecule id="Q94C37-1"/>
    <property type="protein sequence ID" value="AT1G05230.1"/>
    <property type="gene ID" value="AT1G05230"/>
</dbReference>
<dbReference type="EnsemblPlants" id="AT1G05230.10">
    <molecule id="Q94C37-1"/>
    <property type="protein sequence ID" value="AT1G05230.10"/>
    <property type="gene ID" value="AT1G05230"/>
</dbReference>
<dbReference type="EnsemblPlants" id="AT1G05230.11">
    <molecule id="Q94C37-1"/>
    <property type="protein sequence ID" value="AT1G05230.11"/>
    <property type="gene ID" value="AT1G05230"/>
</dbReference>
<dbReference type="EnsemblPlants" id="AT1G05230.2">
    <molecule id="Q94C37-1"/>
    <property type="protein sequence ID" value="AT1G05230.2"/>
    <property type="gene ID" value="AT1G05230"/>
</dbReference>
<dbReference type="EnsemblPlants" id="AT1G05230.4">
    <molecule id="Q94C37-1"/>
    <property type="protein sequence ID" value="AT1G05230.4"/>
    <property type="gene ID" value="AT1G05230"/>
</dbReference>
<dbReference type="EnsemblPlants" id="AT1G05230.5">
    <molecule id="Q94C37-1"/>
    <property type="protein sequence ID" value="AT1G05230.5"/>
    <property type="gene ID" value="AT1G05230"/>
</dbReference>
<dbReference type="EnsemblPlants" id="AT1G05230.6">
    <molecule id="Q94C37-1"/>
    <property type="protein sequence ID" value="AT1G05230.6"/>
    <property type="gene ID" value="AT1G05230"/>
</dbReference>
<dbReference type="EnsemblPlants" id="AT1G05230.7">
    <molecule id="Q94C37-1"/>
    <property type="protein sequence ID" value="AT1G05230.7"/>
    <property type="gene ID" value="AT1G05230"/>
</dbReference>
<dbReference type="EnsemblPlants" id="AT1G05230.8">
    <molecule id="Q94C37-1"/>
    <property type="protein sequence ID" value="AT1G05230.8"/>
    <property type="gene ID" value="AT1G05230"/>
</dbReference>
<dbReference type="EnsemblPlants" id="AT1G05230.9">
    <molecule id="Q94C37-1"/>
    <property type="protein sequence ID" value="AT1G05230.9"/>
    <property type="gene ID" value="AT1G05230"/>
</dbReference>
<dbReference type="GeneID" id="839256"/>
<dbReference type="Gramene" id="AT1G05230.1">
    <molecule id="Q94C37-1"/>
    <property type="protein sequence ID" value="AT1G05230.1"/>
    <property type="gene ID" value="AT1G05230"/>
</dbReference>
<dbReference type="Gramene" id="AT1G05230.10">
    <molecule id="Q94C37-1"/>
    <property type="protein sequence ID" value="AT1G05230.10"/>
    <property type="gene ID" value="AT1G05230"/>
</dbReference>
<dbReference type="Gramene" id="AT1G05230.11">
    <molecule id="Q94C37-1"/>
    <property type="protein sequence ID" value="AT1G05230.11"/>
    <property type="gene ID" value="AT1G05230"/>
</dbReference>
<dbReference type="Gramene" id="AT1G05230.2">
    <molecule id="Q94C37-1"/>
    <property type="protein sequence ID" value="AT1G05230.2"/>
    <property type="gene ID" value="AT1G05230"/>
</dbReference>
<dbReference type="Gramene" id="AT1G05230.4">
    <molecule id="Q94C37-1"/>
    <property type="protein sequence ID" value="AT1G05230.4"/>
    <property type="gene ID" value="AT1G05230"/>
</dbReference>
<dbReference type="Gramene" id="AT1G05230.5">
    <molecule id="Q94C37-1"/>
    <property type="protein sequence ID" value="AT1G05230.5"/>
    <property type="gene ID" value="AT1G05230"/>
</dbReference>
<dbReference type="Gramene" id="AT1G05230.6">
    <molecule id="Q94C37-1"/>
    <property type="protein sequence ID" value="AT1G05230.6"/>
    <property type="gene ID" value="AT1G05230"/>
</dbReference>
<dbReference type="Gramene" id="AT1G05230.7">
    <molecule id="Q94C37-1"/>
    <property type="protein sequence ID" value="AT1G05230.7"/>
    <property type="gene ID" value="AT1G05230"/>
</dbReference>
<dbReference type="Gramene" id="AT1G05230.8">
    <molecule id="Q94C37-1"/>
    <property type="protein sequence ID" value="AT1G05230.8"/>
    <property type="gene ID" value="AT1G05230"/>
</dbReference>
<dbReference type="Gramene" id="AT1G05230.9">
    <molecule id="Q94C37-1"/>
    <property type="protein sequence ID" value="AT1G05230.9"/>
    <property type="gene ID" value="AT1G05230"/>
</dbReference>
<dbReference type="KEGG" id="ath:AT1G05230"/>
<dbReference type="Araport" id="AT1G05230"/>
<dbReference type="TAIR" id="AT1G05230">
    <property type="gene designation" value="HDG2"/>
</dbReference>
<dbReference type="eggNOG" id="ENOG502QU3P">
    <property type="taxonomic scope" value="Eukaryota"/>
</dbReference>
<dbReference type="InParanoid" id="Q94C37"/>
<dbReference type="OMA" id="DDQMVHN"/>
<dbReference type="OrthoDB" id="6159439at2759"/>
<dbReference type="PhylomeDB" id="Q94C37"/>
<dbReference type="PRO" id="PR:Q94C37"/>
<dbReference type="Proteomes" id="UP000006548">
    <property type="component" value="Chromosome 1"/>
</dbReference>
<dbReference type="ExpressionAtlas" id="Q94C37">
    <property type="expression patterns" value="baseline and differential"/>
</dbReference>
<dbReference type="GO" id="GO:0005634">
    <property type="term" value="C:nucleus"/>
    <property type="evidence" value="ECO:0007669"/>
    <property type="project" value="UniProtKB-SubCell"/>
</dbReference>
<dbReference type="GO" id="GO:0003677">
    <property type="term" value="F:DNA binding"/>
    <property type="evidence" value="ECO:0007669"/>
    <property type="project" value="UniProtKB-KW"/>
</dbReference>
<dbReference type="GO" id="GO:0003700">
    <property type="term" value="F:DNA-binding transcription factor activity"/>
    <property type="evidence" value="ECO:0000250"/>
    <property type="project" value="TAIR"/>
</dbReference>
<dbReference type="GO" id="GO:0000981">
    <property type="term" value="F:DNA-binding transcription factor activity, RNA polymerase II-specific"/>
    <property type="evidence" value="ECO:0007669"/>
    <property type="project" value="InterPro"/>
</dbReference>
<dbReference type="GO" id="GO:0008289">
    <property type="term" value="F:lipid binding"/>
    <property type="evidence" value="ECO:0007669"/>
    <property type="project" value="InterPro"/>
</dbReference>
<dbReference type="GO" id="GO:0048497">
    <property type="term" value="P:maintenance of floral organ identity"/>
    <property type="evidence" value="ECO:0000315"/>
    <property type="project" value="UniProtKB"/>
</dbReference>
<dbReference type="GO" id="GO:0010090">
    <property type="term" value="P:trichome morphogenesis"/>
    <property type="evidence" value="ECO:0000315"/>
    <property type="project" value="TAIR"/>
</dbReference>
<dbReference type="CDD" id="cd00086">
    <property type="entry name" value="homeodomain"/>
    <property type="match status" value="1"/>
</dbReference>
<dbReference type="CDD" id="cd08875">
    <property type="entry name" value="START_ArGLABRA2_like"/>
    <property type="match status" value="1"/>
</dbReference>
<dbReference type="FunFam" id="3.30.530.20:FF:000026">
    <property type="entry name" value="Homeobox-leucine zipper protein GLABRA 2"/>
    <property type="match status" value="1"/>
</dbReference>
<dbReference type="FunFam" id="1.10.10.60:FF:000229">
    <property type="entry name" value="Homeobox-leucine zipper protein HDG1"/>
    <property type="match status" value="1"/>
</dbReference>
<dbReference type="Gene3D" id="3.30.530.20">
    <property type="match status" value="1"/>
</dbReference>
<dbReference type="Gene3D" id="1.10.10.60">
    <property type="entry name" value="Homeodomain-like"/>
    <property type="match status" value="1"/>
</dbReference>
<dbReference type="InterPro" id="IPR042160">
    <property type="entry name" value="GLABRA2/ANL2/PDF2/ATML1-like"/>
</dbReference>
<dbReference type="InterPro" id="IPR001356">
    <property type="entry name" value="HD"/>
</dbReference>
<dbReference type="InterPro" id="IPR017970">
    <property type="entry name" value="Homeobox_CS"/>
</dbReference>
<dbReference type="InterPro" id="IPR009057">
    <property type="entry name" value="Homeodomain-like_sf"/>
</dbReference>
<dbReference type="InterPro" id="IPR023393">
    <property type="entry name" value="START-like_dom_sf"/>
</dbReference>
<dbReference type="InterPro" id="IPR002913">
    <property type="entry name" value="START_lipid-bd_dom"/>
</dbReference>
<dbReference type="PANTHER" id="PTHR45654:SF93">
    <property type="entry name" value="HOMEOBOX-LEUCINE ZIPPER PROTEIN HDG2-RELATED"/>
    <property type="match status" value="1"/>
</dbReference>
<dbReference type="PANTHER" id="PTHR45654">
    <property type="entry name" value="HOMEOBOX-LEUCINE ZIPPER PROTEIN MERISTEM L1"/>
    <property type="match status" value="1"/>
</dbReference>
<dbReference type="Pfam" id="PF00046">
    <property type="entry name" value="Homeodomain"/>
    <property type="match status" value="1"/>
</dbReference>
<dbReference type="Pfam" id="PF01852">
    <property type="entry name" value="START"/>
    <property type="match status" value="1"/>
</dbReference>
<dbReference type="SMART" id="SM00389">
    <property type="entry name" value="HOX"/>
    <property type="match status" value="1"/>
</dbReference>
<dbReference type="SMART" id="SM00234">
    <property type="entry name" value="START"/>
    <property type="match status" value="1"/>
</dbReference>
<dbReference type="SUPFAM" id="SSF55961">
    <property type="entry name" value="Bet v1-like"/>
    <property type="match status" value="2"/>
</dbReference>
<dbReference type="SUPFAM" id="SSF46689">
    <property type="entry name" value="Homeodomain-like"/>
    <property type="match status" value="1"/>
</dbReference>
<dbReference type="PROSITE" id="PS00027">
    <property type="entry name" value="HOMEOBOX_1"/>
    <property type="match status" value="1"/>
</dbReference>
<dbReference type="PROSITE" id="PS50071">
    <property type="entry name" value="HOMEOBOX_2"/>
    <property type="match status" value="1"/>
</dbReference>
<dbReference type="PROSITE" id="PS50848">
    <property type="entry name" value="START"/>
    <property type="match status" value="1"/>
</dbReference>